<comment type="function">
    <text evidence="1">Endonuclease that specifically degrades the RNA of RNA-DNA hybrids.</text>
</comment>
<comment type="catalytic activity">
    <reaction evidence="1">
        <text>Endonucleolytic cleavage to 5'-phosphomonoester.</text>
        <dbReference type="EC" id="3.1.26.4"/>
    </reaction>
</comment>
<comment type="cofactor">
    <cofactor evidence="1">
        <name>Mn(2+)</name>
        <dbReference type="ChEBI" id="CHEBI:29035"/>
    </cofactor>
    <cofactor evidence="1">
        <name>Mg(2+)</name>
        <dbReference type="ChEBI" id="CHEBI:18420"/>
    </cofactor>
    <text evidence="1">Manganese or magnesium. Binds 1 divalent metal ion per monomer in the absence of substrate. May bind a second metal ion after substrate binding.</text>
</comment>
<comment type="subcellular location">
    <subcellularLocation>
        <location evidence="1">Cytoplasm</location>
    </subcellularLocation>
</comment>
<comment type="similarity">
    <text evidence="1">Belongs to the RNase HII family.</text>
</comment>
<gene>
    <name evidence="1" type="primary">rnhB</name>
    <name type="ordered locus">SPD_1020</name>
</gene>
<feature type="chain" id="PRO_1000031210" description="Ribonuclease HII">
    <location>
        <begin position="1"/>
        <end position="259"/>
    </location>
</feature>
<feature type="domain" description="RNase H type-2" evidence="2">
    <location>
        <begin position="70"/>
        <end position="258"/>
    </location>
</feature>
<feature type="binding site" evidence="1">
    <location>
        <position position="76"/>
    </location>
    <ligand>
        <name>a divalent metal cation</name>
        <dbReference type="ChEBI" id="CHEBI:60240"/>
    </ligand>
</feature>
<feature type="binding site" evidence="1">
    <location>
        <position position="77"/>
    </location>
    <ligand>
        <name>a divalent metal cation</name>
        <dbReference type="ChEBI" id="CHEBI:60240"/>
    </ligand>
</feature>
<feature type="binding site" evidence="1">
    <location>
        <position position="168"/>
    </location>
    <ligand>
        <name>a divalent metal cation</name>
        <dbReference type="ChEBI" id="CHEBI:60240"/>
    </ligand>
</feature>
<evidence type="ECO:0000255" key="1">
    <source>
        <dbReference type="HAMAP-Rule" id="MF_00052"/>
    </source>
</evidence>
<evidence type="ECO:0000255" key="2">
    <source>
        <dbReference type="PROSITE-ProRule" id="PRU01319"/>
    </source>
</evidence>
<proteinExistence type="inferred from homology"/>
<name>RNH2_STRP2</name>
<accession>Q04KF4</accession>
<reference key="1">
    <citation type="journal article" date="2007" name="J. Bacteriol.">
        <title>Genome sequence of Avery's virulent serotype 2 strain D39 of Streptococcus pneumoniae and comparison with that of unencapsulated laboratory strain R6.</title>
        <authorList>
            <person name="Lanie J.A."/>
            <person name="Ng W.-L."/>
            <person name="Kazmierczak K.M."/>
            <person name="Andrzejewski T.M."/>
            <person name="Davidsen T.M."/>
            <person name="Wayne K.J."/>
            <person name="Tettelin H."/>
            <person name="Glass J.I."/>
            <person name="Winkler M.E."/>
        </authorList>
    </citation>
    <scope>NUCLEOTIDE SEQUENCE [LARGE SCALE GENOMIC DNA]</scope>
    <source>
        <strain>D39 / NCTC 7466</strain>
    </source>
</reference>
<keyword id="KW-0963">Cytoplasm</keyword>
<keyword id="KW-0255">Endonuclease</keyword>
<keyword id="KW-0378">Hydrolase</keyword>
<keyword id="KW-0464">Manganese</keyword>
<keyword id="KW-0479">Metal-binding</keyword>
<keyword id="KW-0540">Nuclease</keyword>
<keyword id="KW-1185">Reference proteome</keyword>
<sequence>MATIKEIKELLVTVKELESPIFLELEKDNRSGVQKEISKRKRAIQAELDENLRLESMLSYEKELYKQGLTLIVGIDEVGRGPLAGPVVAAAVILPKNCKIKGLNDSKKIPKKKHLEIFQAVQDQALSIGIGIIDNQVIDQVNIYEATKLAMQEAISQLSPQPEHLLIDAMKLDLPISQTSIIKGDANSLSIAAASIVAKVTRDELMKEYDQQFPGYDFATNAGYGTAKHLEGLTKLGVTPIHRTSFEPVKSLVLGKKES</sequence>
<protein>
    <recommendedName>
        <fullName evidence="1">Ribonuclease HII</fullName>
        <shortName evidence="1">RNase HII</shortName>
        <ecNumber evidence="1">3.1.26.4</ecNumber>
    </recommendedName>
</protein>
<dbReference type="EC" id="3.1.26.4" evidence="1"/>
<dbReference type="EMBL" id="CP000410">
    <property type="protein sequence ID" value="ABJ54270.1"/>
    <property type="molecule type" value="Genomic_DNA"/>
</dbReference>
<dbReference type="RefSeq" id="WP_000201141.1">
    <property type="nucleotide sequence ID" value="NZ_JAMLJR010000014.1"/>
</dbReference>
<dbReference type="SMR" id="Q04KF4"/>
<dbReference type="PaxDb" id="373153-SPD_1020"/>
<dbReference type="KEGG" id="spd:SPD_1020"/>
<dbReference type="eggNOG" id="COG0164">
    <property type="taxonomic scope" value="Bacteria"/>
</dbReference>
<dbReference type="HOGENOM" id="CLU_036532_2_1_9"/>
<dbReference type="BioCyc" id="SPNE373153:G1G6V-1111-MONOMER"/>
<dbReference type="Proteomes" id="UP000001452">
    <property type="component" value="Chromosome"/>
</dbReference>
<dbReference type="GO" id="GO:0005737">
    <property type="term" value="C:cytoplasm"/>
    <property type="evidence" value="ECO:0007669"/>
    <property type="project" value="UniProtKB-SubCell"/>
</dbReference>
<dbReference type="GO" id="GO:0032299">
    <property type="term" value="C:ribonuclease H2 complex"/>
    <property type="evidence" value="ECO:0007669"/>
    <property type="project" value="TreeGrafter"/>
</dbReference>
<dbReference type="GO" id="GO:0030145">
    <property type="term" value="F:manganese ion binding"/>
    <property type="evidence" value="ECO:0007669"/>
    <property type="project" value="UniProtKB-UniRule"/>
</dbReference>
<dbReference type="GO" id="GO:0003723">
    <property type="term" value="F:RNA binding"/>
    <property type="evidence" value="ECO:0007669"/>
    <property type="project" value="InterPro"/>
</dbReference>
<dbReference type="GO" id="GO:0004523">
    <property type="term" value="F:RNA-DNA hybrid ribonuclease activity"/>
    <property type="evidence" value="ECO:0007669"/>
    <property type="project" value="UniProtKB-UniRule"/>
</dbReference>
<dbReference type="GO" id="GO:0043137">
    <property type="term" value="P:DNA replication, removal of RNA primer"/>
    <property type="evidence" value="ECO:0007669"/>
    <property type="project" value="TreeGrafter"/>
</dbReference>
<dbReference type="GO" id="GO:0006298">
    <property type="term" value="P:mismatch repair"/>
    <property type="evidence" value="ECO:0007669"/>
    <property type="project" value="TreeGrafter"/>
</dbReference>
<dbReference type="CDD" id="cd07182">
    <property type="entry name" value="RNase_HII_bacteria_HII_like"/>
    <property type="match status" value="1"/>
</dbReference>
<dbReference type="FunFam" id="3.30.420.10:FF:000006">
    <property type="entry name" value="Ribonuclease HII"/>
    <property type="match status" value="1"/>
</dbReference>
<dbReference type="Gene3D" id="3.30.420.10">
    <property type="entry name" value="Ribonuclease H-like superfamily/Ribonuclease H"/>
    <property type="match status" value="1"/>
</dbReference>
<dbReference type="HAMAP" id="MF_00052_B">
    <property type="entry name" value="RNase_HII_B"/>
    <property type="match status" value="1"/>
</dbReference>
<dbReference type="InterPro" id="IPR022898">
    <property type="entry name" value="RNase_HII"/>
</dbReference>
<dbReference type="InterPro" id="IPR001352">
    <property type="entry name" value="RNase_HII/HIII"/>
</dbReference>
<dbReference type="InterPro" id="IPR024567">
    <property type="entry name" value="RNase_HII/HIII_dom"/>
</dbReference>
<dbReference type="InterPro" id="IPR012337">
    <property type="entry name" value="RNaseH-like_sf"/>
</dbReference>
<dbReference type="InterPro" id="IPR036397">
    <property type="entry name" value="RNaseH_sf"/>
</dbReference>
<dbReference type="NCBIfam" id="NF000594">
    <property type="entry name" value="PRK00015.1-1"/>
    <property type="match status" value="1"/>
</dbReference>
<dbReference type="NCBIfam" id="NF000595">
    <property type="entry name" value="PRK00015.1-3"/>
    <property type="match status" value="1"/>
</dbReference>
<dbReference type="PANTHER" id="PTHR10954">
    <property type="entry name" value="RIBONUCLEASE H2 SUBUNIT A"/>
    <property type="match status" value="1"/>
</dbReference>
<dbReference type="PANTHER" id="PTHR10954:SF18">
    <property type="entry name" value="RIBONUCLEASE HII"/>
    <property type="match status" value="1"/>
</dbReference>
<dbReference type="Pfam" id="PF01351">
    <property type="entry name" value="RNase_HII"/>
    <property type="match status" value="1"/>
</dbReference>
<dbReference type="SUPFAM" id="SSF53098">
    <property type="entry name" value="Ribonuclease H-like"/>
    <property type="match status" value="1"/>
</dbReference>
<dbReference type="PROSITE" id="PS51975">
    <property type="entry name" value="RNASE_H_2"/>
    <property type="match status" value="1"/>
</dbReference>
<organism>
    <name type="scientific">Streptococcus pneumoniae serotype 2 (strain D39 / NCTC 7466)</name>
    <dbReference type="NCBI Taxonomy" id="373153"/>
    <lineage>
        <taxon>Bacteria</taxon>
        <taxon>Bacillati</taxon>
        <taxon>Bacillota</taxon>
        <taxon>Bacilli</taxon>
        <taxon>Lactobacillales</taxon>
        <taxon>Streptococcaceae</taxon>
        <taxon>Streptococcus</taxon>
    </lineage>
</organism>